<feature type="chain" id="PRO_0000386021" description="GTPase Obg">
    <location>
        <begin position="1"/>
        <end position="439"/>
    </location>
</feature>
<feature type="domain" description="Obg" evidence="3">
    <location>
        <begin position="1"/>
        <end position="159"/>
    </location>
</feature>
<feature type="domain" description="OBG-type G" evidence="1">
    <location>
        <begin position="160"/>
        <end position="336"/>
    </location>
</feature>
<feature type="domain" description="OCT" evidence="2">
    <location>
        <begin position="358"/>
        <end position="439"/>
    </location>
</feature>
<feature type="region of interest" description="Disordered" evidence="4">
    <location>
        <begin position="338"/>
        <end position="357"/>
    </location>
</feature>
<feature type="compositionally biased region" description="Basic and acidic residues" evidence="4">
    <location>
        <begin position="344"/>
        <end position="354"/>
    </location>
</feature>
<feature type="binding site" evidence="1">
    <location>
        <begin position="166"/>
        <end position="173"/>
    </location>
    <ligand>
        <name>GTP</name>
        <dbReference type="ChEBI" id="CHEBI:37565"/>
    </ligand>
</feature>
<feature type="binding site" evidence="1">
    <location>
        <position position="173"/>
    </location>
    <ligand>
        <name>Mg(2+)</name>
        <dbReference type="ChEBI" id="CHEBI:18420"/>
    </ligand>
</feature>
<feature type="binding site" evidence="1">
    <location>
        <begin position="191"/>
        <end position="195"/>
    </location>
    <ligand>
        <name>GTP</name>
        <dbReference type="ChEBI" id="CHEBI:37565"/>
    </ligand>
</feature>
<feature type="binding site" evidence="1">
    <location>
        <position position="193"/>
    </location>
    <ligand>
        <name>Mg(2+)</name>
        <dbReference type="ChEBI" id="CHEBI:18420"/>
    </ligand>
</feature>
<feature type="binding site" evidence="1">
    <location>
        <begin position="213"/>
        <end position="216"/>
    </location>
    <ligand>
        <name>GTP</name>
        <dbReference type="ChEBI" id="CHEBI:37565"/>
    </ligand>
</feature>
<feature type="binding site" evidence="1">
    <location>
        <begin position="283"/>
        <end position="286"/>
    </location>
    <ligand>
        <name>GTP</name>
        <dbReference type="ChEBI" id="CHEBI:37565"/>
    </ligand>
</feature>
<feature type="binding site" evidence="1">
    <location>
        <begin position="317"/>
        <end position="319"/>
    </location>
    <ligand>
        <name>GTP</name>
        <dbReference type="ChEBI" id="CHEBI:37565"/>
    </ligand>
</feature>
<sequence length="439" mass="48028">MAFVDQAQIEVKAGKGGDGIVSFRHEKFVAMGGPFGGDGGHGGSIIFKVDEGLRTLMDFRYNRHFKAQPGGNGGTKGMTGASADNRVVKVPQGTTVSDADTGEVLADMLENGQELVVAKGGRGGRGNIHFATPANPAPELSENGEPGQIRNLKLELKVLADVGLVGFPSAGKSTLLSVVSNAKPKVAAYHFTTLSPNIGMVRLDDDRDFVMADLPGLIEGASQGIGLGFQFLRHVERTKVILHLVDMSGIEGTDPYTQYRKILDELQQYDETILNRPQIVVPTKMDMPDSEENLAKFRKEVATDSGLPIQPEIVPISSITRDGVKDLMRLTADMLATAPAPESYRPETKNDTSEKSYTFKPETHDFTVEWIADEERWLLSGAEIEKLFLMTNIQRDATIMRFARQLRHMGVDDKLREAGAKDGDDVRINNSDFVFEFSE</sequence>
<comment type="function">
    <text evidence="1">An essential GTPase which binds GTP, GDP and possibly (p)ppGpp with moderate affinity, with high nucleotide exchange rates and a fairly low GTP hydrolysis rate. Plays a role in control of the cell cycle, stress response, ribosome biogenesis and in those bacteria that undergo differentiation, in morphogenesis control.</text>
</comment>
<comment type="cofactor">
    <cofactor evidence="1">
        <name>Mg(2+)</name>
        <dbReference type="ChEBI" id="CHEBI:18420"/>
    </cofactor>
</comment>
<comment type="subunit">
    <text evidence="1">Monomer.</text>
</comment>
<comment type="subcellular location">
    <subcellularLocation>
        <location evidence="1">Cytoplasm</location>
    </subcellularLocation>
</comment>
<comment type="similarity">
    <text evidence="1">Belongs to the TRAFAC class OBG-HflX-like GTPase superfamily. OBG GTPase family.</text>
</comment>
<protein>
    <recommendedName>
        <fullName evidence="1">GTPase Obg</fullName>
        <ecNumber evidence="1">3.6.5.-</ecNumber>
    </recommendedName>
    <alternativeName>
        <fullName evidence="1">GTP-binding protein Obg</fullName>
    </alternativeName>
</protein>
<name>OBG_LEUMM</name>
<reference key="1">
    <citation type="journal article" date="2006" name="Proc. Natl. Acad. Sci. U.S.A.">
        <title>Comparative genomics of the lactic acid bacteria.</title>
        <authorList>
            <person name="Makarova K.S."/>
            <person name="Slesarev A."/>
            <person name="Wolf Y.I."/>
            <person name="Sorokin A."/>
            <person name="Mirkin B."/>
            <person name="Koonin E.V."/>
            <person name="Pavlov A."/>
            <person name="Pavlova N."/>
            <person name="Karamychev V."/>
            <person name="Polouchine N."/>
            <person name="Shakhova V."/>
            <person name="Grigoriev I."/>
            <person name="Lou Y."/>
            <person name="Rohksar D."/>
            <person name="Lucas S."/>
            <person name="Huang K."/>
            <person name="Goodstein D.M."/>
            <person name="Hawkins T."/>
            <person name="Plengvidhya V."/>
            <person name="Welker D."/>
            <person name="Hughes J."/>
            <person name="Goh Y."/>
            <person name="Benson A."/>
            <person name="Baldwin K."/>
            <person name="Lee J.-H."/>
            <person name="Diaz-Muniz I."/>
            <person name="Dosti B."/>
            <person name="Smeianov V."/>
            <person name="Wechter W."/>
            <person name="Barabote R."/>
            <person name="Lorca G."/>
            <person name="Altermann E."/>
            <person name="Barrangou R."/>
            <person name="Ganesan B."/>
            <person name="Xie Y."/>
            <person name="Rawsthorne H."/>
            <person name="Tamir D."/>
            <person name="Parker C."/>
            <person name="Breidt F."/>
            <person name="Broadbent J.R."/>
            <person name="Hutkins R."/>
            <person name="O'Sullivan D."/>
            <person name="Steele J."/>
            <person name="Unlu G."/>
            <person name="Saier M.H. Jr."/>
            <person name="Klaenhammer T."/>
            <person name="Richardson P."/>
            <person name="Kozyavkin S."/>
            <person name="Weimer B.C."/>
            <person name="Mills D.A."/>
        </authorList>
    </citation>
    <scope>NUCLEOTIDE SEQUENCE [LARGE SCALE GENOMIC DNA]</scope>
    <source>
        <strain>ATCC 8293 / DSM 20343 / BCRC 11652 / CCM 1803 / JCM 6124 / NCDO 523 / NBRC 100496 / NCIMB 8023 / NCTC 12954 / NRRL B-1118 / 37Y</strain>
    </source>
</reference>
<proteinExistence type="inferred from homology"/>
<evidence type="ECO:0000255" key="1">
    <source>
        <dbReference type="HAMAP-Rule" id="MF_01454"/>
    </source>
</evidence>
<evidence type="ECO:0000255" key="2">
    <source>
        <dbReference type="PROSITE-ProRule" id="PRU01229"/>
    </source>
</evidence>
<evidence type="ECO:0000255" key="3">
    <source>
        <dbReference type="PROSITE-ProRule" id="PRU01231"/>
    </source>
</evidence>
<evidence type="ECO:0000256" key="4">
    <source>
        <dbReference type="SAM" id="MobiDB-lite"/>
    </source>
</evidence>
<organism>
    <name type="scientific">Leuconostoc mesenteroides subsp. mesenteroides (strain ATCC 8293 / DSM 20343 / BCRC 11652 / CCM 1803 / JCM 6124 / NCDO 523 / NBRC 100496 / NCIMB 8023 / NCTC 12954 / NRRL B-1118 / 37Y)</name>
    <dbReference type="NCBI Taxonomy" id="203120"/>
    <lineage>
        <taxon>Bacteria</taxon>
        <taxon>Bacillati</taxon>
        <taxon>Bacillota</taxon>
        <taxon>Bacilli</taxon>
        <taxon>Lactobacillales</taxon>
        <taxon>Lactobacillaceae</taxon>
        <taxon>Leuconostoc</taxon>
    </lineage>
</organism>
<accession>Q03YT6</accession>
<keyword id="KW-0963">Cytoplasm</keyword>
<keyword id="KW-0342">GTP-binding</keyword>
<keyword id="KW-0378">Hydrolase</keyword>
<keyword id="KW-0460">Magnesium</keyword>
<keyword id="KW-0479">Metal-binding</keyword>
<keyword id="KW-0547">Nucleotide-binding</keyword>
<keyword id="KW-1185">Reference proteome</keyword>
<gene>
    <name evidence="1" type="primary">obg</name>
    <name type="ordered locus">LEUM_0521</name>
</gene>
<dbReference type="EC" id="3.6.5.-" evidence="1"/>
<dbReference type="EMBL" id="CP000414">
    <property type="protein sequence ID" value="ABJ61636.1"/>
    <property type="molecule type" value="Genomic_DNA"/>
</dbReference>
<dbReference type="SMR" id="Q03YT6"/>
<dbReference type="EnsemblBacteria" id="ABJ61636">
    <property type="protein sequence ID" value="ABJ61636"/>
    <property type="gene ID" value="LEUM_0521"/>
</dbReference>
<dbReference type="GeneID" id="29576785"/>
<dbReference type="KEGG" id="lme:LEUM_0521"/>
<dbReference type="eggNOG" id="COG0536">
    <property type="taxonomic scope" value="Bacteria"/>
</dbReference>
<dbReference type="HOGENOM" id="CLU_011747_2_1_9"/>
<dbReference type="Proteomes" id="UP000000362">
    <property type="component" value="Chromosome"/>
</dbReference>
<dbReference type="GO" id="GO:0005737">
    <property type="term" value="C:cytoplasm"/>
    <property type="evidence" value="ECO:0007669"/>
    <property type="project" value="UniProtKB-SubCell"/>
</dbReference>
<dbReference type="GO" id="GO:0005525">
    <property type="term" value="F:GTP binding"/>
    <property type="evidence" value="ECO:0007669"/>
    <property type="project" value="UniProtKB-UniRule"/>
</dbReference>
<dbReference type="GO" id="GO:0003924">
    <property type="term" value="F:GTPase activity"/>
    <property type="evidence" value="ECO:0007669"/>
    <property type="project" value="UniProtKB-UniRule"/>
</dbReference>
<dbReference type="GO" id="GO:0000287">
    <property type="term" value="F:magnesium ion binding"/>
    <property type="evidence" value="ECO:0007669"/>
    <property type="project" value="InterPro"/>
</dbReference>
<dbReference type="GO" id="GO:0042254">
    <property type="term" value="P:ribosome biogenesis"/>
    <property type="evidence" value="ECO:0007669"/>
    <property type="project" value="UniProtKB-UniRule"/>
</dbReference>
<dbReference type="CDD" id="cd01898">
    <property type="entry name" value="Obg"/>
    <property type="match status" value="1"/>
</dbReference>
<dbReference type="FunFam" id="2.70.210.12:FF:000001">
    <property type="entry name" value="GTPase Obg"/>
    <property type="match status" value="1"/>
</dbReference>
<dbReference type="Gene3D" id="3.30.300.350">
    <property type="entry name" value="GTP-binding protein OBG, C-terminal domain"/>
    <property type="match status" value="1"/>
</dbReference>
<dbReference type="Gene3D" id="2.70.210.12">
    <property type="entry name" value="GTP1/OBG domain"/>
    <property type="match status" value="1"/>
</dbReference>
<dbReference type="Gene3D" id="3.40.50.300">
    <property type="entry name" value="P-loop containing nucleotide triphosphate hydrolases"/>
    <property type="match status" value="1"/>
</dbReference>
<dbReference type="HAMAP" id="MF_01454">
    <property type="entry name" value="GTPase_Obg"/>
    <property type="match status" value="1"/>
</dbReference>
<dbReference type="InterPro" id="IPR031167">
    <property type="entry name" value="G_OBG"/>
</dbReference>
<dbReference type="InterPro" id="IPR006073">
    <property type="entry name" value="GTP-bd"/>
</dbReference>
<dbReference type="InterPro" id="IPR014100">
    <property type="entry name" value="GTP-bd_Obg/CgtA"/>
</dbReference>
<dbReference type="InterPro" id="IPR036346">
    <property type="entry name" value="GTP-bd_prot_GTP1/OBG_C_sf"/>
</dbReference>
<dbReference type="InterPro" id="IPR006074">
    <property type="entry name" value="GTP1-OBG_CS"/>
</dbReference>
<dbReference type="InterPro" id="IPR006169">
    <property type="entry name" value="GTP1_OBG_dom"/>
</dbReference>
<dbReference type="InterPro" id="IPR036726">
    <property type="entry name" value="GTP1_OBG_dom_sf"/>
</dbReference>
<dbReference type="InterPro" id="IPR045086">
    <property type="entry name" value="OBG_GTPase"/>
</dbReference>
<dbReference type="InterPro" id="IPR015349">
    <property type="entry name" value="OCT_dom"/>
</dbReference>
<dbReference type="InterPro" id="IPR027417">
    <property type="entry name" value="P-loop_NTPase"/>
</dbReference>
<dbReference type="NCBIfam" id="TIGR02729">
    <property type="entry name" value="Obg_CgtA"/>
    <property type="match status" value="1"/>
</dbReference>
<dbReference type="NCBIfam" id="TIGR03595">
    <property type="entry name" value="Obg_CgtA_exten"/>
    <property type="match status" value="1"/>
</dbReference>
<dbReference type="NCBIfam" id="NF008954">
    <property type="entry name" value="PRK12296.1"/>
    <property type="match status" value="1"/>
</dbReference>
<dbReference type="NCBIfam" id="NF008955">
    <property type="entry name" value="PRK12297.1"/>
    <property type="match status" value="1"/>
</dbReference>
<dbReference type="NCBIfam" id="NF008956">
    <property type="entry name" value="PRK12299.1"/>
    <property type="match status" value="1"/>
</dbReference>
<dbReference type="PANTHER" id="PTHR11702">
    <property type="entry name" value="DEVELOPMENTALLY REGULATED GTP-BINDING PROTEIN-RELATED"/>
    <property type="match status" value="1"/>
</dbReference>
<dbReference type="PANTHER" id="PTHR11702:SF31">
    <property type="entry name" value="MITOCHONDRIAL RIBOSOME-ASSOCIATED GTPASE 2"/>
    <property type="match status" value="1"/>
</dbReference>
<dbReference type="Pfam" id="PF09269">
    <property type="entry name" value="DUF1967"/>
    <property type="match status" value="1"/>
</dbReference>
<dbReference type="Pfam" id="PF01018">
    <property type="entry name" value="GTP1_OBG"/>
    <property type="match status" value="1"/>
</dbReference>
<dbReference type="Pfam" id="PF01926">
    <property type="entry name" value="MMR_HSR1"/>
    <property type="match status" value="1"/>
</dbReference>
<dbReference type="PIRSF" id="PIRSF002401">
    <property type="entry name" value="GTP_bd_Obg/CgtA"/>
    <property type="match status" value="1"/>
</dbReference>
<dbReference type="PRINTS" id="PR00326">
    <property type="entry name" value="GTP1OBG"/>
</dbReference>
<dbReference type="SUPFAM" id="SSF102741">
    <property type="entry name" value="Obg GTP-binding protein C-terminal domain"/>
    <property type="match status" value="1"/>
</dbReference>
<dbReference type="SUPFAM" id="SSF82051">
    <property type="entry name" value="Obg GTP-binding protein N-terminal domain"/>
    <property type="match status" value="1"/>
</dbReference>
<dbReference type="SUPFAM" id="SSF52540">
    <property type="entry name" value="P-loop containing nucleoside triphosphate hydrolases"/>
    <property type="match status" value="1"/>
</dbReference>
<dbReference type="PROSITE" id="PS51710">
    <property type="entry name" value="G_OBG"/>
    <property type="match status" value="1"/>
</dbReference>
<dbReference type="PROSITE" id="PS00905">
    <property type="entry name" value="GTP1_OBG"/>
    <property type="match status" value="1"/>
</dbReference>
<dbReference type="PROSITE" id="PS51883">
    <property type="entry name" value="OBG"/>
    <property type="match status" value="1"/>
</dbReference>
<dbReference type="PROSITE" id="PS51881">
    <property type="entry name" value="OCT"/>
    <property type="match status" value="1"/>
</dbReference>